<accession>P16748</accession>
<dbReference type="EMBL" id="X17403">
    <property type="protein sequence ID" value="CAA35383.1"/>
    <property type="molecule type" value="Genomic_DNA"/>
</dbReference>
<dbReference type="PIR" id="S09831">
    <property type="entry name" value="S09831"/>
</dbReference>
<dbReference type="Proteomes" id="UP000008991">
    <property type="component" value="Segment"/>
</dbReference>
<feature type="chain" id="PRO_0000115338" description="Uncharacterized protein UL68">
    <location>
        <begin position="1"/>
        <end position="110"/>
    </location>
</feature>
<protein>
    <recommendedName>
        <fullName>Uncharacterized protein UL68</fullName>
    </recommendedName>
</protein>
<proteinExistence type="predicted"/>
<gene>
    <name type="primary">UL68</name>
</gene>
<sequence length="110" mass="12727">MIIMMYACLSLVFFLSVSFFPHKLCTVRVRTPYTVSVNDGPLLFPHRKKKNKAQYTCGFLVRIELGVYFFSSPTSSPSHSFYIYTCPRLGGNVCRFQVVVTMMMWFLSGW</sequence>
<reference key="1">
    <citation type="journal article" date="1990" name="Curr. Top. Microbiol. Immunol.">
        <title>Analysis of the protein-coding content of the sequence of human cytomegalovirus strain AD169.</title>
        <authorList>
            <person name="Chee M.S."/>
            <person name="Bankier A.T."/>
            <person name="Beck S."/>
            <person name="Bohni R."/>
            <person name="Brown C.M."/>
            <person name="Cerny R."/>
            <person name="Horsnell T."/>
            <person name="Hutchison C.A. III"/>
            <person name="Kouzarides T."/>
            <person name="Martignetti J.A."/>
            <person name="Preddie E."/>
            <person name="Satchwell S.C."/>
            <person name="Tomlinson P."/>
            <person name="Weston K.M."/>
            <person name="Barrell B.G."/>
        </authorList>
    </citation>
    <scope>NUCLEOTIDE SEQUENCE [LARGE SCALE GENOMIC DNA]</scope>
</reference>
<organism>
    <name type="scientific">Human cytomegalovirus (strain AD169)</name>
    <name type="common">HHV-5</name>
    <name type="synonym">Human herpesvirus 5</name>
    <dbReference type="NCBI Taxonomy" id="10360"/>
    <lineage>
        <taxon>Viruses</taxon>
        <taxon>Duplodnaviria</taxon>
        <taxon>Heunggongvirae</taxon>
        <taxon>Peploviricota</taxon>
        <taxon>Herviviricetes</taxon>
        <taxon>Herpesvirales</taxon>
        <taxon>Orthoherpesviridae</taxon>
        <taxon>Betaherpesvirinae</taxon>
        <taxon>Cytomegalovirus</taxon>
        <taxon>Cytomegalovirus humanbeta5</taxon>
        <taxon>Human cytomegalovirus</taxon>
    </lineage>
</organism>
<name>UL68_HCMVA</name>
<organismHost>
    <name type="scientific">Homo sapiens</name>
    <name type="common">Human</name>
    <dbReference type="NCBI Taxonomy" id="9606"/>
</organismHost>